<reference key="1">
    <citation type="submission" date="2009-02" db="EMBL/GenBank/DDBJ databases">
        <title>Vibrio splendidus str. LGP32 complete genome.</title>
        <authorList>
            <person name="Mazel D."/>
            <person name="Le Roux F."/>
        </authorList>
    </citation>
    <scope>NUCLEOTIDE SEQUENCE [LARGE SCALE GENOMIC DNA]</scope>
    <source>
        <strain>LGP32</strain>
    </source>
</reference>
<comment type="similarity">
    <text evidence="1">Belongs to the UPF0246 family.</text>
</comment>
<evidence type="ECO:0000255" key="1">
    <source>
        <dbReference type="HAMAP-Rule" id="MF_00652"/>
    </source>
</evidence>
<sequence>MLVVVSPAKTLDYESPLATERFSQPEFVEHSAELIEVCRKLTPADVSALMKVSDKIAGLNVARFEQWSETFTQENARQAILAFKGDVYTGLDAETLSDDDFDYAQNHLRMLSGLYGLLKPLDLMQPYRLEMGTRLANERGTNLYQFWGNIITDKLNEALNAQGDNVLINLASNEYFKAVKPKSLDGQIITPVFKDCKNGQYKVISFYAKKARGMMARYIIENKIDSVEALTRFDTAGYYFVEEESNAKELVFKREEQN</sequence>
<accession>B7VJ56</accession>
<gene>
    <name type="ordered locus">VS_0505</name>
</gene>
<feature type="chain" id="PRO_1000200434" description="UPF0246 protein VS_0505">
    <location>
        <begin position="1"/>
        <end position="258"/>
    </location>
</feature>
<dbReference type="EMBL" id="FM954972">
    <property type="protein sequence ID" value="CAV17510.1"/>
    <property type="molecule type" value="Genomic_DNA"/>
</dbReference>
<dbReference type="SMR" id="B7VJ56"/>
<dbReference type="STRING" id="575788.VS_0505"/>
<dbReference type="KEGG" id="vsp:VS_0505"/>
<dbReference type="PATRIC" id="fig|575788.5.peg.1871"/>
<dbReference type="eggNOG" id="COG3022">
    <property type="taxonomic scope" value="Bacteria"/>
</dbReference>
<dbReference type="HOGENOM" id="CLU_061989_0_0_6"/>
<dbReference type="Proteomes" id="UP000009100">
    <property type="component" value="Chromosome 1"/>
</dbReference>
<dbReference type="GO" id="GO:0005829">
    <property type="term" value="C:cytosol"/>
    <property type="evidence" value="ECO:0007669"/>
    <property type="project" value="TreeGrafter"/>
</dbReference>
<dbReference type="GO" id="GO:0033194">
    <property type="term" value="P:response to hydroperoxide"/>
    <property type="evidence" value="ECO:0007669"/>
    <property type="project" value="TreeGrafter"/>
</dbReference>
<dbReference type="HAMAP" id="MF_00652">
    <property type="entry name" value="UPF0246"/>
    <property type="match status" value="1"/>
</dbReference>
<dbReference type="InterPro" id="IPR005583">
    <property type="entry name" value="YaaA"/>
</dbReference>
<dbReference type="NCBIfam" id="NF002541">
    <property type="entry name" value="PRK02101.1-1"/>
    <property type="match status" value="1"/>
</dbReference>
<dbReference type="NCBIfam" id="NF002542">
    <property type="entry name" value="PRK02101.1-3"/>
    <property type="match status" value="1"/>
</dbReference>
<dbReference type="PANTHER" id="PTHR30283:SF4">
    <property type="entry name" value="PEROXIDE STRESS RESISTANCE PROTEIN YAAA"/>
    <property type="match status" value="1"/>
</dbReference>
<dbReference type="PANTHER" id="PTHR30283">
    <property type="entry name" value="PEROXIDE STRESS RESPONSE PROTEIN YAAA"/>
    <property type="match status" value="1"/>
</dbReference>
<dbReference type="Pfam" id="PF03883">
    <property type="entry name" value="H2O2_YaaD"/>
    <property type="match status" value="1"/>
</dbReference>
<proteinExistence type="inferred from homology"/>
<protein>
    <recommendedName>
        <fullName evidence="1">UPF0246 protein VS_0505</fullName>
    </recommendedName>
</protein>
<name>Y505_VIBA3</name>
<organism>
    <name type="scientific">Vibrio atlanticus (strain LGP32)</name>
    <name type="common">Vibrio splendidus (strain Mel32)</name>
    <dbReference type="NCBI Taxonomy" id="575788"/>
    <lineage>
        <taxon>Bacteria</taxon>
        <taxon>Pseudomonadati</taxon>
        <taxon>Pseudomonadota</taxon>
        <taxon>Gammaproteobacteria</taxon>
        <taxon>Vibrionales</taxon>
        <taxon>Vibrionaceae</taxon>
        <taxon>Vibrio</taxon>
    </lineage>
</organism>